<keyword id="KW-0004">4Fe-4S</keyword>
<keyword id="KW-0963">Cytoplasm</keyword>
<keyword id="KW-0408">Iron</keyword>
<keyword id="KW-0411">Iron-sulfur</keyword>
<keyword id="KW-0479">Metal-binding</keyword>
<keyword id="KW-0949">S-adenosyl-L-methionine</keyword>
<keyword id="KW-0808">Transferase</keyword>
<organism>
    <name type="scientific">Synechococcus sp. (strain CC9605)</name>
    <dbReference type="NCBI Taxonomy" id="110662"/>
    <lineage>
        <taxon>Bacteria</taxon>
        <taxon>Bacillati</taxon>
        <taxon>Cyanobacteriota</taxon>
        <taxon>Cyanophyceae</taxon>
        <taxon>Synechococcales</taxon>
        <taxon>Synechococcaceae</taxon>
        <taxon>Synechococcus</taxon>
    </lineage>
</organism>
<sequence>MTSTPTKPTVAFAHLGCEKNRVDTEHMVGLLAEAGYGVSTDESDAAVVVVNTCSFIQDAREESVRTLVELAEQGKELIIAGCLAQHFQEELLESIPEAKAIVGTGDYQHIVDVLQRVEVGERVNRVSAVPTFVGDEHLPRQRTTDQAVAFLKVAEGCDYRCAFCIIPKLRGDQRSRPIESIVAEAHQLAAQGVQELILISQITTNYGLDLYGKPKLAELLRALGDVEIPWIRVHYAYPTGLTPDVLAAYREVPNVVPYLDLPLQHSHPEMLRAMNRPWQADVNDRLLDQIREQLPDAVLRTTLIVGFPGETEEHFQHLMGFLERQRFDHVGVFTFSPEDGTAAADLPDRVDPEVAQARKDALMALQQPISAERNSRWVGRTVDVLIEQHNPQTGEMIGRCARFAPEVDGEVRVQPGAEGQQAAPGSLVPVEITGADIYDLNGQMVGARAMVAAIRADA</sequence>
<gene>
    <name evidence="1" type="primary">rimO</name>
    <name type="ordered locus">Syncc9605_2337</name>
</gene>
<protein>
    <recommendedName>
        <fullName evidence="1">Ribosomal protein uS12 methylthiotransferase RimO</fullName>
        <shortName evidence="1">uS12 MTTase</shortName>
        <shortName evidence="1">uS12 methylthiotransferase</shortName>
        <ecNumber evidence="1">2.8.4.4</ecNumber>
    </recommendedName>
    <alternativeName>
        <fullName evidence="1">Ribosomal protein uS12 (aspartate-C(3))-methylthiotransferase</fullName>
    </alternativeName>
    <alternativeName>
        <fullName evidence="1">Ribosome maturation factor RimO</fullName>
    </alternativeName>
</protein>
<feature type="chain" id="PRO_0000375033" description="Ribosomal protein uS12 methylthiotransferase RimO">
    <location>
        <begin position="1"/>
        <end position="458"/>
    </location>
</feature>
<feature type="domain" description="MTTase N-terminal" evidence="1">
    <location>
        <begin position="8"/>
        <end position="119"/>
    </location>
</feature>
<feature type="domain" description="Radical SAM core" evidence="2">
    <location>
        <begin position="143"/>
        <end position="372"/>
    </location>
</feature>
<feature type="domain" description="TRAM" evidence="1">
    <location>
        <begin position="375"/>
        <end position="446"/>
    </location>
</feature>
<feature type="binding site" evidence="1">
    <location>
        <position position="17"/>
    </location>
    <ligand>
        <name>[4Fe-4S] cluster</name>
        <dbReference type="ChEBI" id="CHEBI:49883"/>
        <label>1</label>
    </ligand>
</feature>
<feature type="binding site" evidence="1">
    <location>
        <position position="53"/>
    </location>
    <ligand>
        <name>[4Fe-4S] cluster</name>
        <dbReference type="ChEBI" id="CHEBI:49883"/>
        <label>1</label>
    </ligand>
</feature>
<feature type="binding site" evidence="1">
    <location>
        <position position="82"/>
    </location>
    <ligand>
        <name>[4Fe-4S] cluster</name>
        <dbReference type="ChEBI" id="CHEBI:49883"/>
        <label>1</label>
    </ligand>
</feature>
<feature type="binding site" evidence="1">
    <location>
        <position position="157"/>
    </location>
    <ligand>
        <name>[4Fe-4S] cluster</name>
        <dbReference type="ChEBI" id="CHEBI:49883"/>
        <label>2</label>
        <note>4Fe-4S-S-AdoMet</note>
    </ligand>
</feature>
<feature type="binding site" evidence="1">
    <location>
        <position position="161"/>
    </location>
    <ligand>
        <name>[4Fe-4S] cluster</name>
        <dbReference type="ChEBI" id="CHEBI:49883"/>
        <label>2</label>
        <note>4Fe-4S-S-AdoMet</note>
    </ligand>
</feature>
<feature type="binding site" evidence="1">
    <location>
        <position position="164"/>
    </location>
    <ligand>
        <name>[4Fe-4S] cluster</name>
        <dbReference type="ChEBI" id="CHEBI:49883"/>
        <label>2</label>
        <note>4Fe-4S-S-AdoMet</note>
    </ligand>
</feature>
<comment type="function">
    <text evidence="1">Catalyzes the methylthiolation of an aspartic acid residue of ribosomal protein uS12.</text>
</comment>
<comment type="catalytic activity">
    <reaction evidence="1">
        <text>L-aspartate(89)-[ribosomal protein uS12]-hydrogen + (sulfur carrier)-SH + AH2 + 2 S-adenosyl-L-methionine = 3-methylsulfanyl-L-aspartate(89)-[ribosomal protein uS12]-hydrogen + (sulfur carrier)-H + 5'-deoxyadenosine + L-methionine + A + S-adenosyl-L-homocysteine + 2 H(+)</text>
        <dbReference type="Rhea" id="RHEA:37087"/>
        <dbReference type="Rhea" id="RHEA-COMP:10460"/>
        <dbReference type="Rhea" id="RHEA-COMP:10461"/>
        <dbReference type="Rhea" id="RHEA-COMP:14737"/>
        <dbReference type="Rhea" id="RHEA-COMP:14739"/>
        <dbReference type="ChEBI" id="CHEBI:13193"/>
        <dbReference type="ChEBI" id="CHEBI:15378"/>
        <dbReference type="ChEBI" id="CHEBI:17319"/>
        <dbReference type="ChEBI" id="CHEBI:17499"/>
        <dbReference type="ChEBI" id="CHEBI:29917"/>
        <dbReference type="ChEBI" id="CHEBI:29961"/>
        <dbReference type="ChEBI" id="CHEBI:57844"/>
        <dbReference type="ChEBI" id="CHEBI:57856"/>
        <dbReference type="ChEBI" id="CHEBI:59789"/>
        <dbReference type="ChEBI" id="CHEBI:64428"/>
        <dbReference type="ChEBI" id="CHEBI:73599"/>
        <dbReference type="EC" id="2.8.4.4"/>
    </reaction>
</comment>
<comment type="cofactor">
    <cofactor evidence="1">
        <name>[4Fe-4S] cluster</name>
        <dbReference type="ChEBI" id="CHEBI:49883"/>
    </cofactor>
    <text evidence="1">Binds 2 [4Fe-4S] clusters. One cluster is coordinated with 3 cysteines and an exchangeable S-adenosyl-L-methionine.</text>
</comment>
<comment type="subcellular location">
    <subcellularLocation>
        <location evidence="1">Cytoplasm</location>
    </subcellularLocation>
</comment>
<comment type="similarity">
    <text evidence="1">Belongs to the methylthiotransferase family. RimO subfamily.</text>
</comment>
<evidence type="ECO:0000255" key="1">
    <source>
        <dbReference type="HAMAP-Rule" id="MF_01865"/>
    </source>
</evidence>
<evidence type="ECO:0000255" key="2">
    <source>
        <dbReference type="PROSITE-ProRule" id="PRU01266"/>
    </source>
</evidence>
<name>RIMO_SYNSC</name>
<proteinExistence type="inferred from homology"/>
<accession>Q3AH63</accession>
<dbReference type="EC" id="2.8.4.4" evidence="1"/>
<dbReference type="EMBL" id="CP000110">
    <property type="protein sequence ID" value="ABB36069.1"/>
    <property type="molecule type" value="Genomic_DNA"/>
</dbReference>
<dbReference type="RefSeq" id="WP_011365267.1">
    <property type="nucleotide sequence ID" value="NC_007516.1"/>
</dbReference>
<dbReference type="SMR" id="Q3AH63"/>
<dbReference type="STRING" id="110662.Syncc9605_2337"/>
<dbReference type="KEGG" id="syd:Syncc9605_2337"/>
<dbReference type="eggNOG" id="COG0621">
    <property type="taxonomic scope" value="Bacteria"/>
</dbReference>
<dbReference type="HOGENOM" id="CLU_018697_0_1_3"/>
<dbReference type="OrthoDB" id="9805215at2"/>
<dbReference type="GO" id="GO:0005829">
    <property type="term" value="C:cytosol"/>
    <property type="evidence" value="ECO:0007669"/>
    <property type="project" value="TreeGrafter"/>
</dbReference>
<dbReference type="GO" id="GO:0051539">
    <property type="term" value="F:4 iron, 4 sulfur cluster binding"/>
    <property type="evidence" value="ECO:0007669"/>
    <property type="project" value="UniProtKB-UniRule"/>
</dbReference>
<dbReference type="GO" id="GO:0035599">
    <property type="term" value="F:aspartic acid methylthiotransferase activity"/>
    <property type="evidence" value="ECO:0007669"/>
    <property type="project" value="TreeGrafter"/>
</dbReference>
<dbReference type="GO" id="GO:0046872">
    <property type="term" value="F:metal ion binding"/>
    <property type="evidence" value="ECO:0007669"/>
    <property type="project" value="UniProtKB-KW"/>
</dbReference>
<dbReference type="GO" id="GO:0103039">
    <property type="term" value="F:protein methylthiotransferase activity"/>
    <property type="evidence" value="ECO:0007669"/>
    <property type="project" value="UniProtKB-EC"/>
</dbReference>
<dbReference type="GO" id="GO:0006400">
    <property type="term" value="P:tRNA modification"/>
    <property type="evidence" value="ECO:0007669"/>
    <property type="project" value="InterPro"/>
</dbReference>
<dbReference type="CDD" id="cd01335">
    <property type="entry name" value="Radical_SAM"/>
    <property type="match status" value="1"/>
</dbReference>
<dbReference type="FunFam" id="3.80.30.20:FF:000001">
    <property type="entry name" value="tRNA-2-methylthio-N(6)-dimethylallyladenosine synthase 2"/>
    <property type="match status" value="1"/>
</dbReference>
<dbReference type="Gene3D" id="3.40.50.12160">
    <property type="entry name" value="Methylthiotransferase, N-terminal domain"/>
    <property type="match status" value="1"/>
</dbReference>
<dbReference type="Gene3D" id="2.40.50.140">
    <property type="entry name" value="Nucleic acid-binding proteins"/>
    <property type="match status" value="1"/>
</dbReference>
<dbReference type="Gene3D" id="3.80.30.20">
    <property type="entry name" value="tm_1862 like domain"/>
    <property type="match status" value="1"/>
</dbReference>
<dbReference type="HAMAP" id="MF_01865">
    <property type="entry name" value="MTTase_RimO"/>
    <property type="match status" value="1"/>
</dbReference>
<dbReference type="InterPro" id="IPR006638">
    <property type="entry name" value="Elp3/MiaA/NifB-like_rSAM"/>
</dbReference>
<dbReference type="InterPro" id="IPR005839">
    <property type="entry name" value="Methylthiotransferase"/>
</dbReference>
<dbReference type="InterPro" id="IPR020612">
    <property type="entry name" value="Methylthiotransferase_CS"/>
</dbReference>
<dbReference type="InterPro" id="IPR013848">
    <property type="entry name" value="Methylthiotransferase_N"/>
</dbReference>
<dbReference type="InterPro" id="IPR038135">
    <property type="entry name" value="Methylthiotransferase_N_sf"/>
</dbReference>
<dbReference type="InterPro" id="IPR012340">
    <property type="entry name" value="NA-bd_OB-fold"/>
</dbReference>
<dbReference type="InterPro" id="IPR005840">
    <property type="entry name" value="Ribosomal_uS12_MeSTrfase_RimO"/>
</dbReference>
<dbReference type="InterPro" id="IPR007197">
    <property type="entry name" value="rSAM"/>
</dbReference>
<dbReference type="InterPro" id="IPR023404">
    <property type="entry name" value="rSAM_horseshoe"/>
</dbReference>
<dbReference type="InterPro" id="IPR002792">
    <property type="entry name" value="TRAM_dom"/>
</dbReference>
<dbReference type="NCBIfam" id="TIGR01125">
    <property type="entry name" value="30S ribosomal protein S12 methylthiotransferase RimO"/>
    <property type="match status" value="1"/>
</dbReference>
<dbReference type="NCBIfam" id="TIGR00089">
    <property type="entry name" value="MiaB/RimO family radical SAM methylthiotransferase"/>
    <property type="match status" value="1"/>
</dbReference>
<dbReference type="PANTHER" id="PTHR43837">
    <property type="entry name" value="RIBOSOMAL PROTEIN S12 METHYLTHIOTRANSFERASE RIMO"/>
    <property type="match status" value="1"/>
</dbReference>
<dbReference type="PANTHER" id="PTHR43837:SF1">
    <property type="entry name" value="RIBOSOMAL PROTEIN US12 METHYLTHIOTRANSFERASE RIMO"/>
    <property type="match status" value="1"/>
</dbReference>
<dbReference type="Pfam" id="PF04055">
    <property type="entry name" value="Radical_SAM"/>
    <property type="match status" value="1"/>
</dbReference>
<dbReference type="Pfam" id="PF18693">
    <property type="entry name" value="TRAM_2"/>
    <property type="match status" value="1"/>
</dbReference>
<dbReference type="Pfam" id="PF00919">
    <property type="entry name" value="UPF0004"/>
    <property type="match status" value="1"/>
</dbReference>
<dbReference type="SFLD" id="SFLDG01082">
    <property type="entry name" value="B12-binding_domain_containing"/>
    <property type="match status" value="1"/>
</dbReference>
<dbReference type="SFLD" id="SFLDS00029">
    <property type="entry name" value="Radical_SAM"/>
    <property type="match status" value="1"/>
</dbReference>
<dbReference type="SFLD" id="SFLDF00274">
    <property type="entry name" value="ribosomal_protein_S12_methylth"/>
    <property type="match status" value="1"/>
</dbReference>
<dbReference type="SMART" id="SM00729">
    <property type="entry name" value="Elp3"/>
    <property type="match status" value="1"/>
</dbReference>
<dbReference type="SUPFAM" id="SSF102114">
    <property type="entry name" value="Radical SAM enzymes"/>
    <property type="match status" value="1"/>
</dbReference>
<dbReference type="PROSITE" id="PS51449">
    <property type="entry name" value="MTTASE_N"/>
    <property type="match status" value="1"/>
</dbReference>
<dbReference type="PROSITE" id="PS01278">
    <property type="entry name" value="MTTASE_RADICAL"/>
    <property type="match status" value="1"/>
</dbReference>
<dbReference type="PROSITE" id="PS51918">
    <property type="entry name" value="RADICAL_SAM"/>
    <property type="match status" value="1"/>
</dbReference>
<dbReference type="PROSITE" id="PS50926">
    <property type="entry name" value="TRAM"/>
    <property type="match status" value="1"/>
</dbReference>
<reference key="1">
    <citation type="submission" date="2005-07" db="EMBL/GenBank/DDBJ databases">
        <title>Complete sequence of Synechococcus sp. CC9605.</title>
        <authorList>
            <consortium name="US DOE Joint Genome Institute"/>
            <person name="Copeland A."/>
            <person name="Lucas S."/>
            <person name="Lapidus A."/>
            <person name="Barry K."/>
            <person name="Detter J.C."/>
            <person name="Glavina T."/>
            <person name="Hammon N."/>
            <person name="Israni S."/>
            <person name="Pitluck S."/>
            <person name="Schmutz J."/>
            <person name="Martinez M."/>
            <person name="Larimer F."/>
            <person name="Land M."/>
            <person name="Kyrpides N."/>
            <person name="Ivanova N."/>
            <person name="Richardson P."/>
        </authorList>
    </citation>
    <scope>NUCLEOTIDE SEQUENCE [LARGE SCALE GENOMIC DNA]</scope>
    <source>
        <strain>CC9605</strain>
    </source>
</reference>